<dbReference type="EC" id="2.1.2.11" evidence="1"/>
<dbReference type="EMBL" id="CU207366">
    <property type="protein sequence ID" value="CAL67055.1"/>
    <property type="status" value="ALT_INIT"/>
    <property type="molecule type" value="Genomic_DNA"/>
</dbReference>
<dbReference type="RefSeq" id="WP_041250085.1">
    <property type="nucleotide sequence ID" value="NC_008571.1"/>
</dbReference>
<dbReference type="SMR" id="A0M360"/>
<dbReference type="STRING" id="411154.GFO_2090"/>
<dbReference type="KEGG" id="gfo:GFO_2090"/>
<dbReference type="eggNOG" id="COG0413">
    <property type="taxonomic scope" value="Bacteria"/>
</dbReference>
<dbReference type="HOGENOM" id="CLU_036645_1_0_10"/>
<dbReference type="OrthoDB" id="9781789at2"/>
<dbReference type="UniPathway" id="UPA00028">
    <property type="reaction ID" value="UER00003"/>
</dbReference>
<dbReference type="Proteomes" id="UP000000755">
    <property type="component" value="Chromosome"/>
</dbReference>
<dbReference type="GO" id="GO:0005737">
    <property type="term" value="C:cytoplasm"/>
    <property type="evidence" value="ECO:0007669"/>
    <property type="project" value="UniProtKB-SubCell"/>
</dbReference>
<dbReference type="GO" id="GO:0003864">
    <property type="term" value="F:3-methyl-2-oxobutanoate hydroxymethyltransferase activity"/>
    <property type="evidence" value="ECO:0007669"/>
    <property type="project" value="UniProtKB-UniRule"/>
</dbReference>
<dbReference type="GO" id="GO:0000287">
    <property type="term" value="F:magnesium ion binding"/>
    <property type="evidence" value="ECO:0007669"/>
    <property type="project" value="TreeGrafter"/>
</dbReference>
<dbReference type="GO" id="GO:0015940">
    <property type="term" value="P:pantothenate biosynthetic process"/>
    <property type="evidence" value="ECO:0007669"/>
    <property type="project" value="UniProtKB-UniRule"/>
</dbReference>
<dbReference type="CDD" id="cd06557">
    <property type="entry name" value="KPHMT-like"/>
    <property type="match status" value="1"/>
</dbReference>
<dbReference type="FunFam" id="3.20.20.60:FF:000017">
    <property type="entry name" value="3-methyl-2-oxobutanoate hydroxymethyltransferase"/>
    <property type="match status" value="1"/>
</dbReference>
<dbReference type="Gene3D" id="3.20.20.60">
    <property type="entry name" value="Phosphoenolpyruvate-binding domains"/>
    <property type="match status" value="1"/>
</dbReference>
<dbReference type="HAMAP" id="MF_00156">
    <property type="entry name" value="PanB"/>
    <property type="match status" value="1"/>
</dbReference>
<dbReference type="InterPro" id="IPR003700">
    <property type="entry name" value="Pantoate_hydroxy_MeTrfase"/>
</dbReference>
<dbReference type="InterPro" id="IPR015813">
    <property type="entry name" value="Pyrv/PenolPyrv_kinase-like_dom"/>
</dbReference>
<dbReference type="InterPro" id="IPR040442">
    <property type="entry name" value="Pyrv_kinase-like_dom_sf"/>
</dbReference>
<dbReference type="NCBIfam" id="TIGR00222">
    <property type="entry name" value="panB"/>
    <property type="match status" value="1"/>
</dbReference>
<dbReference type="NCBIfam" id="NF001452">
    <property type="entry name" value="PRK00311.1"/>
    <property type="match status" value="1"/>
</dbReference>
<dbReference type="PANTHER" id="PTHR20881">
    <property type="entry name" value="3-METHYL-2-OXOBUTANOATE HYDROXYMETHYLTRANSFERASE"/>
    <property type="match status" value="1"/>
</dbReference>
<dbReference type="PANTHER" id="PTHR20881:SF0">
    <property type="entry name" value="3-METHYL-2-OXOBUTANOATE HYDROXYMETHYLTRANSFERASE"/>
    <property type="match status" value="1"/>
</dbReference>
<dbReference type="Pfam" id="PF02548">
    <property type="entry name" value="Pantoate_transf"/>
    <property type="match status" value="1"/>
</dbReference>
<dbReference type="PIRSF" id="PIRSF000388">
    <property type="entry name" value="Pantoate_hydroxy_MeTrfase"/>
    <property type="match status" value="1"/>
</dbReference>
<dbReference type="SUPFAM" id="SSF51621">
    <property type="entry name" value="Phosphoenolpyruvate/pyruvate domain"/>
    <property type="match status" value="1"/>
</dbReference>
<evidence type="ECO:0000255" key="1">
    <source>
        <dbReference type="HAMAP-Rule" id="MF_00156"/>
    </source>
</evidence>
<evidence type="ECO:0000305" key="2"/>
<sequence length="272" mass="29961">MSVAKKEYKRITVKSLVDMKSNGEKISMLTAYDFTMAQIVDGAGIDVILVGDSASNVMAGHETTLPITLDQMIYHATSVVRAITRSLVVVDLPFGSYQSDPKEALRSAIRIMKESGGHAVKLEGGKEVKESIKRIIHAGIPVMGHLGLTPQSIYKFGTYTVRAKEEQEAEKLKSDAKLLEKMGCFAIVLEKVPAELAKEVAESITIPVIGIGAGNGVDGQVLVVHDMLGMTHEFNPRFLRRYADLHGEMTKAFQNYRDDVKSRKFPSDDEQY</sequence>
<accession>A0M360</accession>
<feature type="chain" id="PRO_0000297276" description="3-methyl-2-oxobutanoate hydroxymethyltransferase">
    <location>
        <begin position="1"/>
        <end position="272"/>
    </location>
</feature>
<feature type="active site" description="Proton acceptor" evidence="1">
    <location>
        <position position="190"/>
    </location>
</feature>
<feature type="binding site" evidence="1">
    <location>
        <begin position="52"/>
        <end position="53"/>
    </location>
    <ligand>
        <name>3-methyl-2-oxobutanoate</name>
        <dbReference type="ChEBI" id="CHEBI:11851"/>
    </ligand>
</feature>
<feature type="binding site" evidence="1">
    <location>
        <position position="52"/>
    </location>
    <ligand>
        <name>Mg(2+)</name>
        <dbReference type="ChEBI" id="CHEBI:18420"/>
    </ligand>
</feature>
<feature type="binding site" evidence="1">
    <location>
        <position position="91"/>
    </location>
    <ligand>
        <name>3-methyl-2-oxobutanoate</name>
        <dbReference type="ChEBI" id="CHEBI:11851"/>
    </ligand>
</feature>
<feature type="binding site" evidence="1">
    <location>
        <position position="91"/>
    </location>
    <ligand>
        <name>Mg(2+)</name>
        <dbReference type="ChEBI" id="CHEBI:18420"/>
    </ligand>
</feature>
<feature type="binding site" evidence="1">
    <location>
        <position position="121"/>
    </location>
    <ligand>
        <name>3-methyl-2-oxobutanoate</name>
        <dbReference type="ChEBI" id="CHEBI:11851"/>
    </ligand>
</feature>
<feature type="binding site" evidence="1">
    <location>
        <position position="123"/>
    </location>
    <ligand>
        <name>Mg(2+)</name>
        <dbReference type="ChEBI" id="CHEBI:18420"/>
    </ligand>
</feature>
<reference key="1">
    <citation type="journal article" date="2006" name="Environ. Microbiol.">
        <title>Whole genome analysis of the marine Bacteroidetes'Gramella forsetii' reveals adaptations to degradation of polymeric organic matter.</title>
        <authorList>
            <person name="Bauer M."/>
            <person name="Kube M."/>
            <person name="Teeling H."/>
            <person name="Richter M."/>
            <person name="Lombardot T."/>
            <person name="Allers E."/>
            <person name="Wuerdemann C.A."/>
            <person name="Quast C."/>
            <person name="Kuhl H."/>
            <person name="Knaust F."/>
            <person name="Woebken D."/>
            <person name="Bischof K."/>
            <person name="Mussmann M."/>
            <person name="Choudhuri J.V."/>
            <person name="Meyer F."/>
            <person name="Reinhardt R."/>
            <person name="Amann R.I."/>
            <person name="Gloeckner F.O."/>
        </authorList>
    </citation>
    <scope>NUCLEOTIDE SEQUENCE [LARGE SCALE GENOMIC DNA]</scope>
    <source>
        <strain>DSM 17595 / CGMCC 1.15422 / KT0803</strain>
    </source>
</reference>
<comment type="function">
    <text evidence="1">Catalyzes the reversible reaction in which hydroxymethyl group from 5,10-methylenetetrahydrofolate is transferred onto alpha-ketoisovalerate to form ketopantoate.</text>
</comment>
<comment type="catalytic activity">
    <reaction evidence="1">
        <text>3-methyl-2-oxobutanoate + (6R)-5,10-methylene-5,6,7,8-tetrahydrofolate + H2O = 2-dehydropantoate + (6S)-5,6,7,8-tetrahydrofolate</text>
        <dbReference type="Rhea" id="RHEA:11824"/>
        <dbReference type="ChEBI" id="CHEBI:11561"/>
        <dbReference type="ChEBI" id="CHEBI:11851"/>
        <dbReference type="ChEBI" id="CHEBI:15377"/>
        <dbReference type="ChEBI" id="CHEBI:15636"/>
        <dbReference type="ChEBI" id="CHEBI:57453"/>
        <dbReference type="EC" id="2.1.2.11"/>
    </reaction>
</comment>
<comment type="cofactor">
    <cofactor evidence="1">
        <name>Mg(2+)</name>
        <dbReference type="ChEBI" id="CHEBI:18420"/>
    </cofactor>
    <text evidence="1">Binds 1 Mg(2+) ion per subunit.</text>
</comment>
<comment type="pathway">
    <text evidence="1">Cofactor biosynthesis; (R)-pantothenate biosynthesis; (R)-pantoate from 3-methyl-2-oxobutanoate: step 1/2.</text>
</comment>
<comment type="subunit">
    <text evidence="1">Homodecamer; pentamer of dimers.</text>
</comment>
<comment type="subcellular location">
    <subcellularLocation>
        <location evidence="1">Cytoplasm</location>
    </subcellularLocation>
</comment>
<comment type="similarity">
    <text evidence="1">Belongs to the PanB family.</text>
</comment>
<comment type="sequence caution" evidence="2">
    <conflict type="erroneous initiation">
        <sequence resource="EMBL-CDS" id="CAL67055"/>
    </conflict>
</comment>
<organism>
    <name type="scientific">Christiangramia forsetii (strain DSM 17595 / CGMCC 1.15422 / KT0803)</name>
    <name type="common">Gramella forsetii</name>
    <dbReference type="NCBI Taxonomy" id="411154"/>
    <lineage>
        <taxon>Bacteria</taxon>
        <taxon>Pseudomonadati</taxon>
        <taxon>Bacteroidota</taxon>
        <taxon>Flavobacteriia</taxon>
        <taxon>Flavobacteriales</taxon>
        <taxon>Flavobacteriaceae</taxon>
        <taxon>Christiangramia</taxon>
    </lineage>
</organism>
<proteinExistence type="inferred from homology"/>
<name>PANB_CHRFK</name>
<gene>
    <name evidence="1" type="primary">panB</name>
    <name type="ordered locus">GFO_2090</name>
</gene>
<keyword id="KW-0963">Cytoplasm</keyword>
<keyword id="KW-0460">Magnesium</keyword>
<keyword id="KW-0479">Metal-binding</keyword>
<keyword id="KW-0566">Pantothenate biosynthesis</keyword>
<keyword id="KW-0808">Transferase</keyword>
<protein>
    <recommendedName>
        <fullName evidence="1">3-methyl-2-oxobutanoate hydroxymethyltransferase</fullName>
        <ecNumber evidence="1">2.1.2.11</ecNumber>
    </recommendedName>
    <alternativeName>
        <fullName evidence="1">Ketopantoate hydroxymethyltransferase</fullName>
        <shortName evidence="1">KPHMT</shortName>
    </alternativeName>
</protein>